<comment type="function">
    <text evidence="1">Acts as a regulator of endocytic traffic by participating in membrane delivery. Required for the abscission step in cytokinesis, possibly by acting as an 'address tag' delivering recycling endosome membranes to the cleavage furrow during late cytokinesis (By similarity).</text>
</comment>
<comment type="subunit">
    <text evidence="1">Homodimer. Forms a complex with Rab11 (rab11a or rab11b) and arf6 (By similarity).</text>
</comment>
<comment type="subcellular location">
    <subcellularLocation>
        <location evidence="1">Recycling endosome membrane</location>
        <topology evidence="1">Peripheral membrane protein</topology>
    </subcellularLocation>
    <subcellularLocation>
        <location evidence="1">Cleavage furrow</location>
    </subcellularLocation>
    <subcellularLocation>
        <location evidence="1">Midbody</location>
    </subcellularLocation>
    <subcellularLocation>
        <location evidence="1">Cytoplasmic vesicle</location>
    </subcellularLocation>
    <text evidence="1">Recruited to the cleavage furrow and the midbody during cytokinesis.</text>
</comment>
<comment type="domain">
    <text evidence="1">The RBD-FIP domain mediates the interaction with Rab11 (rab11a or rab11b).</text>
</comment>
<feature type="chain" id="PRO_0000390974" description="Rab11 family-interacting protein 4">
    <location>
        <begin position="1"/>
        <end position="633"/>
    </location>
</feature>
<feature type="domain" description="EF-hand 1" evidence="3">
    <location>
        <begin position="17"/>
        <end position="52"/>
    </location>
</feature>
<feature type="domain" description="EF-hand 2" evidence="3">
    <location>
        <begin position="50"/>
        <end position="85"/>
    </location>
</feature>
<feature type="domain" description="FIP-RBD" evidence="4">
    <location>
        <begin position="570"/>
        <end position="632"/>
    </location>
</feature>
<feature type="region of interest" description="Disordered" evidence="5">
    <location>
        <begin position="152"/>
        <end position="182"/>
    </location>
</feature>
<feature type="region of interest" description="Disordered" evidence="5">
    <location>
        <begin position="218"/>
        <end position="257"/>
    </location>
</feature>
<feature type="coiled-coil region" evidence="2">
    <location>
        <begin position="410"/>
        <end position="613"/>
    </location>
</feature>
<feature type="compositionally biased region" description="Polar residues" evidence="5">
    <location>
        <begin position="238"/>
        <end position="254"/>
    </location>
</feature>
<feature type="binding site" evidence="6">
    <location>
        <position position="30"/>
    </location>
    <ligand>
        <name>Ca(2+)</name>
        <dbReference type="ChEBI" id="CHEBI:29108"/>
        <label>1</label>
    </ligand>
</feature>
<feature type="binding site" evidence="6">
    <location>
        <position position="32"/>
    </location>
    <ligand>
        <name>Ca(2+)</name>
        <dbReference type="ChEBI" id="CHEBI:29108"/>
        <label>1</label>
    </ligand>
</feature>
<feature type="binding site" evidence="6">
    <location>
        <position position="34"/>
    </location>
    <ligand>
        <name>Ca(2+)</name>
        <dbReference type="ChEBI" id="CHEBI:29108"/>
        <label>1</label>
    </ligand>
</feature>
<feature type="binding site" evidence="6">
    <location>
        <position position="63"/>
    </location>
    <ligand>
        <name>Ca(2+)</name>
        <dbReference type="ChEBI" id="CHEBI:29108"/>
        <label>2</label>
    </ligand>
</feature>
<feature type="binding site" evidence="6">
    <location>
        <position position="65"/>
    </location>
    <ligand>
        <name>Ca(2+)</name>
        <dbReference type="ChEBI" id="CHEBI:29108"/>
        <label>2</label>
    </ligand>
</feature>
<feature type="binding site" evidence="6">
    <location>
        <position position="69"/>
    </location>
    <ligand>
        <name>Ca(2+)</name>
        <dbReference type="ChEBI" id="CHEBI:29108"/>
        <label>2</label>
    </ligand>
</feature>
<feature type="binding site" evidence="6">
    <location>
        <position position="74"/>
    </location>
    <ligand>
        <name>Ca(2+)</name>
        <dbReference type="ChEBI" id="CHEBI:29108"/>
        <label>2</label>
    </ligand>
</feature>
<proteinExistence type="evidence at transcript level"/>
<evidence type="ECO:0000250" key="1"/>
<evidence type="ECO:0000255" key="2"/>
<evidence type="ECO:0000255" key="3">
    <source>
        <dbReference type="PROSITE-ProRule" id="PRU00448"/>
    </source>
</evidence>
<evidence type="ECO:0000255" key="4">
    <source>
        <dbReference type="PROSITE-ProRule" id="PRU00844"/>
    </source>
</evidence>
<evidence type="ECO:0000256" key="5">
    <source>
        <dbReference type="SAM" id="MobiDB-lite"/>
    </source>
</evidence>
<evidence type="ECO:0000305" key="6"/>
<accession>A4IIE8</accession>
<keyword id="KW-0106">Calcium</keyword>
<keyword id="KW-0131">Cell cycle</keyword>
<keyword id="KW-0132">Cell division</keyword>
<keyword id="KW-0175">Coiled coil</keyword>
<keyword id="KW-0968">Cytoplasmic vesicle</keyword>
<keyword id="KW-0967">Endosome</keyword>
<keyword id="KW-0472">Membrane</keyword>
<keyword id="KW-0479">Metal-binding</keyword>
<keyword id="KW-1185">Reference proteome</keyword>
<keyword id="KW-0677">Repeat</keyword>
<keyword id="KW-0813">Transport</keyword>
<name>RFIP4_XENTR</name>
<sequence length="633" mass="71734">MERGSCSAPGDPGHLGLFLQRLRQVFDACDGDADGFIKVEHFVALGLQFAQGDEVKKLAKRLDPNAQGRIGFKDFCHGVLAMKGCDKFVKGILGVTGTAPQHYEAPYTPYYYQSPETIEGPFLDTESSYSDSEFFAYEDGLTLSHRDAQHESDLDSAMYSTPSSEASDEGRNEDKAGGLGSLYLPGEQNLLKPSAGSGFSTHSTASLISNEEQFEDYGEGEDIDYSPGSPCPDDESRTNALSDLGSSVPSSAGQTPRKARLMYNTDLLDIYCTQCSKKITLLNDLEARLKNLKANSPNRKISSTAFGRQLLHNSNLSSSNGSTEDLFRDSIDSCENDITEKVSFLEKKVTELENDNLTNGDVKNKLKHENIHLVHRVHELEEFLRDQETKSEQVLDEESKRHRETYSKLAREKGTEIVLLSARVQELQEENEDLLTSLTRLKSHTVRIDEERQRVWDKLEDTSLRLKDETDLYKRLMDKLRQNRLHFQKEREATQELIEDLRRELDHLQIYKLECERSGRGPPSGLTELNVKSREVELEQEIRRLKQDNQKLRDQNDDLNGQILSLSLYEAKSLFSTQTKAQSLAAEIDSASKDELMEALKEQEEINYRLRQYMDKIILAILDHNPSILEIKN</sequence>
<protein>
    <recommendedName>
        <fullName>Rab11 family-interacting protein 4</fullName>
        <shortName>FIP4-Rab11</shortName>
        <shortName>Rab11-FIP4</shortName>
    </recommendedName>
</protein>
<dbReference type="EMBL" id="BC135989">
    <property type="protein sequence ID" value="AAI35990.1"/>
    <property type="molecule type" value="mRNA"/>
</dbReference>
<dbReference type="RefSeq" id="NP_001096170.1">
    <property type="nucleotide sequence ID" value="NM_001102700.1"/>
</dbReference>
<dbReference type="SMR" id="A4IIE8"/>
<dbReference type="FunCoup" id="A4IIE8">
    <property type="interactions" value="295"/>
</dbReference>
<dbReference type="DNASU" id="100124715"/>
<dbReference type="GeneID" id="100124715"/>
<dbReference type="KEGG" id="xtr:100124715"/>
<dbReference type="AGR" id="Xenbase:XB-GENE-6454385"/>
<dbReference type="CTD" id="84440"/>
<dbReference type="Xenbase" id="XB-GENE-6454385">
    <property type="gene designation" value="rab11fip4"/>
</dbReference>
<dbReference type="InParanoid" id="A4IIE8"/>
<dbReference type="OMA" id="YCKLERE"/>
<dbReference type="OrthoDB" id="418358at2759"/>
<dbReference type="Proteomes" id="UP000008143">
    <property type="component" value="Chromosome 10"/>
</dbReference>
<dbReference type="GO" id="GO:0032154">
    <property type="term" value="C:cleavage furrow"/>
    <property type="evidence" value="ECO:0000250"/>
    <property type="project" value="UniProtKB"/>
</dbReference>
<dbReference type="GO" id="GO:0030139">
    <property type="term" value="C:endocytic vesicle"/>
    <property type="evidence" value="ECO:0000250"/>
    <property type="project" value="UniProtKB"/>
</dbReference>
<dbReference type="GO" id="GO:0005768">
    <property type="term" value="C:endosome"/>
    <property type="evidence" value="ECO:0000250"/>
    <property type="project" value="UniProtKB"/>
</dbReference>
<dbReference type="GO" id="GO:0030496">
    <property type="term" value="C:midbody"/>
    <property type="evidence" value="ECO:0000250"/>
    <property type="project" value="UniProtKB"/>
</dbReference>
<dbReference type="GO" id="GO:0055038">
    <property type="term" value="C:recycling endosome membrane"/>
    <property type="evidence" value="ECO:0000250"/>
    <property type="project" value="UniProtKB"/>
</dbReference>
<dbReference type="GO" id="GO:0005509">
    <property type="term" value="F:calcium ion binding"/>
    <property type="evidence" value="ECO:0007669"/>
    <property type="project" value="InterPro"/>
</dbReference>
<dbReference type="GO" id="GO:0042803">
    <property type="term" value="F:protein homodimerization activity"/>
    <property type="evidence" value="ECO:0000250"/>
    <property type="project" value="UniProtKB"/>
</dbReference>
<dbReference type="GO" id="GO:0031267">
    <property type="term" value="F:small GTPase binding"/>
    <property type="evidence" value="ECO:0000250"/>
    <property type="project" value="UniProtKB"/>
</dbReference>
<dbReference type="GO" id="GO:0051301">
    <property type="term" value="P:cell division"/>
    <property type="evidence" value="ECO:0007669"/>
    <property type="project" value="UniProtKB-KW"/>
</dbReference>
<dbReference type="GO" id="GO:0032465">
    <property type="term" value="P:regulation of cytokinesis"/>
    <property type="evidence" value="ECO:0000250"/>
    <property type="project" value="UniProtKB"/>
</dbReference>
<dbReference type="FunFam" id="1.20.5.2440:FF:000001">
    <property type="entry name" value="RAB11 family interacting protein 4"/>
    <property type="match status" value="1"/>
</dbReference>
<dbReference type="Gene3D" id="1.20.5.2440">
    <property type="match status" value="1"/>
</dbReference>
<dbReference type="Gene3D" id="1.10.238.10">
    <property type="entry name" value="EF-hand"/>
    <property type="match status" value="1"/>
</dbReference>
<dbReference type="InterPro" id="IPR011992">
    <property type="entry name" value="EF-hand-dom_pair"/>
</dbReference>
<dbReference type="InterPro" id="IPR002048">
    <property type="entry name" value="EF_hand_dom"/>
</dbReference>
<dbReference type="InterPro" id="IPR037245">
    <property type="entry name" value="FIP-RBD_C_sf"/>
</dbReference>
<dbReference type="InterPro" id="IPR019018">
    <property type="entry name" value="Rab-bd_FIP-RBD"/>
</dbReference>
<dbReference type="InterPro" id="IPR051977">
    <property type="entry name" value="Rab11-interacting_regulator"/>
</dbReference>
<dbReference type="PANTHER" id="PTHR15726:SF5">
    <property type="entry name" value="RAB11 FAMILY-INTERACTING PROTEIN 4"/>
    <property type="match status" value="1"/>
</dbReference>
<dbReference type="PANTHER" id="PTHR15726">
    <property type="entry name" value="RAB11-FAMILY INTERACTING PROTEIN"/>
    <property type="match status" value="1"/>
</dbReference>
<dbReference type="Pfam" id="PF13499">
    <property type="entry name" value="EF-hand_7"/>
    <property type="match status" value="1"/>
</dbReference>
<dbReference type="Pfam" id="PF25450">
    <property type="entry name" value="Rab11-FIP3"/>
    <property type="match status" value="1"/>
</dbReference>
<dbReference type="Pfam" id="PF09457">
    <property type="entry name" value="RBD-FIP"/>
    <property type="match status" value="1"/>
</dbReference>
<dbReference type="SMART" id="SM00054">
    <property type="entry name" value="EFh"/>
    <property type="match status" value="2"/>
</dbReference>
<dbReference type="SUPFAM" id="SSF47473">
    <property type="entry name" value="EF-hand"/>
    <property type="match status" value="1"/>
</dbReference>
<dbReference type="SUPFAM" id="SSF144270">
    <property type="entry name" value="Eferin C-derminal domain-like"/>
    <property type="match status" value="1"/>
</dbReference>
<dbReference type="PROSITE" id="PS50222">
    <property type="entry name" value="EF_HAND_2"/>
    <property type="match status" value="2"/>
</dbReference>
<dbReference type="PROSITE" id="PS51511">
    <property type="entry name" value="FIP_RBD"/>
    <property type="match status" value="1"/>
</dbReference>
<gene>
    <name type="primary">rab11fip4</name>
</gene>
<reference key="1">
    <citation type="submission" date="2007-03" db="EMBL/GenBank/DDBJ databases">
        <authorList>
            <consortium name="NIH - Xenopus Gene Collection (XGC) project"/>
        </authorList>
    </citation>
    <scope>NUCLEOTIDE SEQUENCE [LARGE SCALE MRNA]</scope>
    <source>
        <tissue>Brain</tissue>
    </source>
</reference>
<organism>
    <name type="scientific">Xenopus tropicalis</name>
    <name type="common">Western clawed frog</name>
    <name type="synonym">Silurana tropicalis</name>
    <dbReference type="NCBI Taxonomy" id="8364"/>
    <lineage>
        <taxon>Eukaryota</taxon>
        <taxon>Metazoa</taxon>
        <taxon>Chordata</taxon>
        <taxon>Craniata</taxon>
        <taxon>Vertebrata</taxon>
        <taxon>Euteleostomi</taxon>
        <taxon>Amphibia</taxon>
        <taxon>Batrachia</taxon>
        <taxon>Anura</taxon>
        <taxon>Pipoidea</taxon>
        <taxon>Pipidae</taxon>
        <taxon>Xenopodinae</taxon>
        <taxon>Xenopus</taxon>
        <taxon>Silurana</taxon>
    </lineage>
</organism>